<feature type="chain" id="PRO_0000241179" description="Glutamyl-tRNA(Gln) amidotransferase subunit A">
    <location>
        <begin position="1"/>
        <end position="492"/>
    </location>
</feature>
<feature type="active site" description="Charge relay system" evidence="1">
    <location>
        <position position="78"/>
    </location>
</feature>
<feature type="active site" description="Charge relay system" evidence="1">
    <location>
        <position position="158"/>
    </location>
</feature>
<feature type="active site" description="Acyl-ester intermediate" evidence="1">
    <location>
        <position position="182"/>
    </location>
</feature>
<sequence>MTRLTDLGVTDLRDGIAKGDFSAKEVAESFLTATNEAEKLNAFITLTPDHALKQAEKADKDRASGQLKPLSGVPLGIKDLFCTNGYRTTAASKIIDNFVPPYESTITEKLFSAGAGMVGKLNLDQFAMGSSNETSAFGNVISPWRQKGDDTALTPGGSSGGSAAAVAAKLVPAATGTDTGGSIRQPASFTGITGLKPTYGRCSRYGVIAFASSLDQAGPMAHSVKDCAALLEVMAGFDPKDSTSVDVMVPNWEKLLSSDIRGKKIGIPKEYRVDGMAPEIESLWQRGIDMMKDAGAEIIDVSLPHTQHALAAYYIIAPAEASSNLARYDGVRYGERKTPEGGNLADMYAATRAAGFGDEVKRRIMIGTYVLSAGFYDAYYIKAQKIRALIARDFEAAFDKCDILLTPATPTAAFALGQKQEDPIAMYLNDVFTVPASLAGLPAMTVPVGLNEQGLPLGLQLIGKPLDEQSVLNAGLALEERAGFTSQPKKWW</sequence>
<dbReference type="EC" id="6.3.5.7" evidence="1"/>
<dbReference type="EMBL" id="AE008692">
    <property type="protein sequence ID" value="AAV89407.1"/>
    <property type="molecule type" value="Genomic_DNA"/>
</dbReference>
<dbReference type="RefSeq" id="WP_011240658.1">
    <property type="nucleotide sequence ID" value="NZ_CP035711.1"/>
</dbReference>
<dbReference type="SMR" id="Q5NPF3"/>
<dbReference type="STRING" id="264203.ZMO0783"/>
<dbReference type="GeneID" id="79904054"/>
<dbReference type="KEGG" id="zmo:ZMO0783"/>
<dbReference type="eggNOG" id="COG0154">
    <property type="taxonomic scope" value="Bacteria"/>
</dbReference>
<dbReference type="HOGENOM" id="CLU_009600_0_3_5"/>
<dbReference type="Proteomes" id="UP000001173">
    <property type="component" value="Chromosome"/>
</dbReference>
<dbReference type="GO" id="GO:0030956">
    <property type="term" value="C:glutamyl-tRNA(Gln) amidotransferase complex"/>
    <property type="evidence" value="ECO:0007669"/>
    <property type="project" value="InterPro"/>
</dbReference>
<dbReference type="GO" id="GO:0005524">
    <property type="term" value="F:ATP binding"/>
    <property type="evidence" value="ECO:0007669"/>
    <property type="project" value="UniProtKB-KW"/>
</dbReference>
<dbReference type="GO" id="GO:0050567">
    <property type="term" value="F:glutaminyl-tRNA synthase (glutamine-hydrolyzing) activity"/>
    <property type="evidence" value="ECO:0007669"/>
    <property type="project" value="UniProtKB-UniRule"/>
</dbReference>
<dbReference type="GO" id="GO:0006412">
    <property type="term" value="P:translation"/>
    <property type="evidence" value="ECO:0007669"/>
    <property type="project" value="UniProtKB-UniRule"/>
</dbReference>
<dbReference type="Gene3D" id="3.90.1300.10">
    <property type="entry name" value="Amidase signature (AS) domain"/>
    <property type="match status" value="1"/>
</dbReference>
<dbReference type="HAMAP" id="MF_00120">
    <property type="entry name" value="GatA"/>
    <property type="match status" value="1"/>
</dbReference>
<dbReference type="InterPro" id="IPR000120">
    <property type="entry name" value="Amidase"/>
</dbReference>
<dbReference type="InterPro" id="IPR020556">
    <property type="entry name" value="Amidase_CS"/>
</dbReference>
<dbReference type="InterPro" id="IPR023631">
    <property type="entry name" value="Amidase_dom"/>
</dbReference>
<dbReference type="InterPro" id="IPR036928">
    <property type="entry name" value="AS_sf"/>
</dbReference>
<dbReference type="InterPro" id="IPR004412">
    <property type="entry name" value="GatA"/>
</dbReference>
<dbReference type="NCBIfam" id="TIGR00132">
    <property type="entry name" value="gatA"/>
    <property type="match status" value="1"/>
</dbReference>
<dbReference type="PANTHER" id="PTHR11895:SF151">
    <property type="entry name" value="GLUTAMYL-TRNA(GLN) AMIDOTRANSFERASE SUBUNIT A"/>
    <property type="match status" value="1"/>
</dbReference>
<dbReference type="PANTHER" id="PTHR11895">
    <property type="entry name" value="TRANSAMIDASE"/>
    <property type="match status" value="1"/>
</dbReference>
<dbReference type="Pfam" id="PF01425">
    <property type="entry name" value="Amidase"/>
    <property type="match status" value="1"/>
</dbReference>
<dbReference type="SUPFAM" id="SSF75304">
    <property type="entry name" value="Amidase signature (AS) enzymes"/>
    <property type="match status" value="1"/>
</dbReference>
<dbReference type="PROSITE" id="PS00571">
    <property type="entry name" value="AMIDASES"/>
    <property type="match status" value="1"/>
</dbReference>
<comment type="function">
    <text evidence="1">Allows the formation of correctly charged Gln-tRNA(Gln) through the transamidation of misacylated Glu-tRNA(Gln) in organisms which lack glutaminyl-tRNA synthetase. The reaction takes place in the presence of glutamine and ATP through an activated gamma-phospho-Glu-tRNA(Gln).</text>
</comment>
<comment type="catalytic activity">
    <reaction evidence="1">
        <text>L-glutamyl-tRNA(Gln) + L-glutamine + ATP + H2O = L-glutaminyl-tRNA(Gln) + L-glutamate + ADP + phosphate + H(+)</text>
        <dbReference type="Rhea" id="RHEA:17521"/>
        <dbReference type="Rhea" id="RHEA-COMP:9681"/>
        <dbReference type="Rhea" id="RHEA-COMP:9684"/>
        <dbReference type="ChEBI" id="CHEBI:15377"/>
        <dbReference type="ChEBI" id="CHEBI:15378"/>
        <dbReference type="ChEBI" id="CHEBI:29985"/>
        <dbReference type="ChEBI" id="CHEBI:30616"/>
        <dbReference type="ChEBI" id="CHEBI:43474"/>
        <dbReference type="ChEBI" id="CHEBI:58359"/>
        <dbReference type="ChEBI" id="CHEBI:78520"/>
        <dbReference type="ChEBI" id="CHEBI:78521"/>
        <dbReference type="ChEBI" id="CHEBI:456216"/>
        <dbReference type="EC" id="6.3.5.7"/>
    </reaction>
</comment>
<comment type="subunit">
    <text evidence="1">Heterotrimer of A, B and C subunits.</text>
</comment>
<comment type="similarity">
    <text evidence="1">Belongs to the amidase family. GatA subfamily.</text>
</comment>
<organism>
    <name type="scientific">Zymomonas mobilis subsp. mobilis (strain ATCC 31821 / ZM4 / CP4)</name>
    <dbReference type="NCBI Taxonomy" id="264203"/>
    <lineage>
        <taxon>Bacteria</taxon>
        <taxon>Pseudomonadati</taxon>
        <taxon>Pseudomonadota</taxon>
        <taxon>Alphaproteobacteria</taxon>
        <taxon>Sphingomonadales</taxon>
        <taxon>Zymomonadaceae</taxon>
        <taxon>Zymomonas</taxon>
    </lineage>
</organism>
<gene>
    <name evidence="1" type="primary">gatA</name>
    <name type="ordered locus">ZMO0783</name>
</gene>
<accession>Q5NPF3</accession>
<evidence type="ECO:0000255" key="1">
    <source>
        <dbReference type="HAMAP-Rule" id="MF_00120"/>
    </source>
</evidence>
<name>GATA_ZYMMO</name>
<reference key="1">
    <citation type="journal article" date="2005" name="Nat. Biotechnol.">
        <title>The genome sequence of the ethanologenic bacterium Zymomonas mobilis ZM4.</title>
        <authorList>
            <person name="Seo J.-S."/>
            <person name="Chong H."/>
            <person name="Park H.S."/>
            <person name="Yoon K.-O."/>
            <person name="Jung C."/>
            <person name="Kim J.J."/>
            <person name="Hong J.H."/>
            <person name="Kim H."/>
            <person name="Kim J.-H."/>
            <person name="Kil J.-I."/>
            <person name="Park C.J."/>
            <person name="Oh H.-M."/>
            <person name="Lee J.-S."/>
            <person name="Jin S.-J."/>
            <person name="Um H.-W."/>
            <person name="Lee H.-J."/>
            <person name="Oh S.-J."/>
            <person name="Kim J.Y."/>
            <person name="Kang H.L."/>
            <person name="Lee S.Y."/>
            <person name="Lee K.J."/>
            <person name="Kang H.S."/>
        </authorList>
    </citation>
    <scope>NUCLEOTIDE SEQUENCE [LARGE SCALE GENOMIC DNA]</scope>
    <source>
        <strain>ATCC 31821 / ZM4 / CP4</strain>
    </source>
</reference>
<protein>
    <recommendedName>
        <fullName evidence="1">Glutamyl-tRNA(Gln) amidotransferase subunit A</fullName>
        <shortName evidence="1">Glu-ADT subunit A</shortName>
        <ecNumber evidence="1">6.3.5.7</ecNumber>
    </recommendedName>
</protein>
<keyword id="KW-0067">ATP-binding</keyword>
<keyword id="KW-0436">Ligase</keyword>
<keyword id="KW-0547">Nucleotide-binding</keyword>
<keyword id="KW-0648">Protein biosynthesis</keyword>
<keyword id="KW-1185">Reference proteome</keyword>
<proteinExistence type="inferred from homology"/>